<keyword id="KW-0067">ATP-binding</keyword>
<keyword id="KW-0963">Cytoplasm</keyword>
<keyword id="KW-0227">DNA damage</keyword>
<keyword id="KW-0233">DNA recombination</keyword>
<keyword id="KW-0234">DNA repair</keyword>
<keyword id="KW-0238">DNA-binding</keyword>
<keyword id="KW-0547">Nucleotide-binding</keyword>
<keyword id="KW-0742">SOS response</keyword>
<gene>
    <name evidence="1" type="primary">recA</name>
    <name type="ordered locus">LIC_11745</name>
</gene>
<sequence length="366" mass="39687">MGESIMKKAKEDAPSVDDSKKLAIEQAMSQIEKQFGKGSIMKLGSDSAKQTVQVIPSGSLDLDIALGIGGYPIGRIVEIYGPESSGKTTLTLSAIAEAQKRGGVAAFIDAEHALDPSYAKKLGVNIDELLVSQPDNGEEALEICESLVRSNAIDLIVIDSVAALVPKAEIEGDMGDSHMGLQARLMSQALRKLTGTIAKSKTVVIFINQIRMKIGVMFGSPETTTGGNALKFYCSVRLDIRKIETIKEKEESVGNRVRVKVVKNKCAPPFKQAEFDIIFNAGISREGSLVDLGVKHDIIHKAGAWYSYNTEKIGQGKEAAKEYLKNNPEIALTIENMVRDLNSLPLLVQENNKKSRKEEKLEQAAG</sequence>
<feature type="chain" id="PRO_0000122743" description="Protein RecA">
    <location>
        <begin position="1"/>
        <end position="366"/>
    </location>
</feature>
<feature type="binding site" evidence="1">
    <location>
        <begin position="81"/>
        <end position="88"/>
    </location>
    <ligand>
        <name>ATP</name>
        <dbReference type="ChEBI" id="CHEBI:30616"/>
    </ligand>
</feature>
<name>RECA_LEPIC</name>
<accession>P62217</accession>
<dbReference type="EMBL" id="AE016823">
    <property type="protein sequence ID" value="AAS70334.1"/>
    <property type="molecule type" value="Genomic_DNA"/>
</dbReference>
<dbReference type="RefSeq" id="WP_000504720.1">
    <property type="nucleotide sequence ID" value="NC_005823.1"/>
</dbReference>
<dbReference type="SMR" id="P62217"/>
<dbReference type="GeneID" id="61141643"/>
<dbReference type="KEGG" id="lic:LIC_11745"/>
<dbReference type="HOGENOM" id="CLU_040469_3_2_12"/>
<dbReference type="Proteomes" id="UP000007037">
    <property type="component" value="Chromosome I"/>
</dbReference>
<dbReference type="GO" id="GO:0005829">
    <property type="term" value="C:cytosol"/>
    <property type="evidence" value="ECO:0007669"/>
    <property type="project" value="TreeGrafter"/>
</dbReference>
<dbReference type="GO" id="GO:0005524">
    <property type="term" value="F:ATP binding"/>
    <property type="evidence" value="ECO:0007669"/>
    <property type="project" value="UniProtKB-UniRule"/>
</dbReference>
<dbReference type="GO" id="GO:0016887">
    <property type="term" value="F:ATP hydrolysis activity"/>
    <property type="evidence" value="ECO:0007669"/>
    <property type="project" value="InterPro"/>
</dbReference>
<dbReference type="GO" id="GO:0140664">
    <property type="term" value="F:ATP-dependent DNA damage sensor activity"/>
    <property type="evidence" value="ECO:0007669"/>
    <property type="project" value="InterPro"/>
</dbReference>
<dbReference type="GO" id="GO:0003684">
    <property type="term" value="F:damaged DNA binding"/>
    <property type="evidence" value="ECO:0007669"/>
    <property type="project" value="UniProtKB-UniRule"/>
</dbReference>
<dbReference type="GO" id="GO:0003697">
    <property type="term" value="F:single-stranded DNA binding"/>
    <property type="evidence" value="ECO:0007669"/>
    <property type="project" value="UniProtKB-UniRule"/>
</dbReference>
<dbReference type="GO" id="GO:0006310">
    <property type="term" value="P:DNA recombination"/>
    <property type="evidence" value="ECO:0007669"/>
    <property type="project" value="UniProtKB-UniRule"/>
</dbReference>
<dbReference type="GO" id="GO:0006281">
    <property type="term" value="P:DNA repair"/>
    <property type="evidence" value="ECO:0007669"/>
    <property type="project" value="UniProtKB-UniRule"/>
</dbReference>
<dbReference type="GO" id="GO:0009432">
    <property type="term" value="P:SOS response"/>
    <property type="evidence" value="ECO:0000269"/>
    <property type="project" value="CollecTF"/>
</dbReference>
<dbReference type="CDD" id="cd00983">
    <property type="entry name" value="RecA"/>
    <property type="match status" value="1"/>
</dbReference>
<dbReference type="FunFam" id="3.40.50.300:FF:000087">
    <property type="entry name" value="Recombinase RecA"/>
    <property type="match status" value="1"/>
</dbReference>
<dbReference type="Gene3D" id="3.40.50.300">
    <property type="entry name" value="P-loop containing nucleotide triphosphate hydrolases"/>
    <property type="match status" value="1"/>
</dbReference>
<dbReference type="HAMAP" id="MF_00268">
    <property type="entry name" value="RecA"/>
    <property type="match status" value="1"/>
</dbReference>
<dbReference type="InterPro" id="IPR003593">
    <property type="entry name" value="AAA+_ATPase"/>
</dbReference>
<dbReference type="InterPro" id="IPR013765">
    <property type="entry name" value="DNA_recomb/repair_RecA"/>
</dbReference>
<dbReference type="InterPro" id="IPR027417">
    <property type="entry name" value="P-loop_NTPase"/>
</dbReference>
<dbReference type="InterPro" id="IPR049261">
    <property type="entry name" value="RecA-like_C"/>
</dbReference>
<dbReference type="InterPro" id="IPR049428">
    <property type="entry name" value="RecA-like_N"/>
</dbReference>
<dbReference type="InterPro" id="IPR020588">
    <property type="entry name" value="RecA_ATP-bd"/>
</dbReference>
<dbReference type="InterPro" id="IPR023400">
    <property type="entry name" value="RecA_C_sf"/>
</dbReference>
<dbReference type="InterPro" id="IPR020587">
    <property type="entry name" value="RecA_monomer-monomer_interface"/>
</dbReference>
<dbReference type="NCBIfam" id="TIGR02012">
    <property type="entry name" value="tigrfam_recA"/>
    <property type="match status" value="1"/>
</dbReference>
<dbReference type="PANTHER" id="PTHR45900:SF1">
    <property type="entry name" value="MITOCHONDRIAL DNA REPAIR PROTEIN RECA HOMOLOG-RELATED"/>
    <property type="match status" value="1"/>
</dbReference>
<dbReference type="PANTHER" id="PTHR45900">
    <property type="entry name" value="RECA"/>
    <property type="match status" value="1"/>
</dbReference>
<dbReference type="Pfam" id="PF00154">
    <property type="entry name" value="RecA"/>
    <property type="match status" value="1"/>
</dbReference>
<dbReference type="Pfam" id="PF21096">
    <property type="entry name" value="RecA_C"/>
    <property type="match status" value="1"/>
</dbReference>
<dbReference type="PRINTS" id="PR00142">
    <property type="entry name" value="RECA"/>
</dbReference>
<dbReference type="SMART" id="SM00382">
    <property type="entry name" value="AAA"/>
    <property type="match status" value="1"/>
</dbReference>
<dbReference type="SUPFAM" id="SSF52540">
    <property type="entry name" value="P-loop containing nucleoside triphosphate hydrolases"/>
    <property type="match status" value="1"/>
</dbReference>
<dbReference type="SUPFAM" id="SSF54752">
    <property type="entry name" value="RecA protein, C-terminal domain"/>
    <property type="match status" value="1"/>
</dbReference>
<dbReference type="PROSITE" id="PS50162">
    <property type="entry name" value="RECA_2"/>
    <property type="match status" value="1"/>
</dbReference>
<dbReference type="PROSITE" id="PS50163">
    <property type="entry name" value="RECA_3"/>
    <property type="match status" value="1"/>
</dbReference>
<reference key="1">
    <citation type="journal article" date="2004" name="J. Bacteriol.">
        <title>Comparative genomics of two Leptospira interrogans serovars reveals novel insights into physiology and pathogenesis.</title>
        <authorList>
            <person name="Nascimento A.L.T.O."/>
            <person name="Ko A.I."/>
            <person name="Martins E.A.L."/>
            <person name="Monteiro-Vitorello C.B."/>
            <person name="Ho P.L."/>
            <person name="Haake D.A."/>
            <person name="Verjovski-Almeida S."/>
            <person name="Hartskeerl R.A."/>
            <person name="Marques M.V."/>
            <person name="Oliveira M.C."/>
            <person name="Menck C.F.M."/>
            <person name="Leite L.C.C."/>
            <person name="Carrer H."/>
            <person name="Coutinho L.L."/>
            <person name="Degrave W.M."/>
            <person name="Dellagostin O.A."/>
            <person name="El-Dorry H."/>
            <person name="Ferro E.S."/>
            <person name="Ferro M.I.T."/>
            <person name="Furlan L.R."/>
            <person name="Gamberini M."/>
            <person name="Giglioti E.A."/>
            <person name="Goes-Neto A."/>
            <person name="Goldman G.H."/>
            <person name="Goldman M.H.S."/>
            <person name="Harakava R."/>
            <person name="Jeronimo S.M.B."/>
            <person name="Junqueira-de-Azevedo I.L.M."/>
            <person name="Kimura E.T."/>
            <person name="Kuramae E.E."/>
            <person name="Lemos E.G.M."/>
            <person name="Lemos M.V.F."/>
            <person name="Marino C.L."/>
            <person name="Nunes L.R."/>
            <person name="de Oliveira R.C."/>
            <person name="Pereira G.G."/>
            <person name="Reis M.S."/>
            <person name="Schriefer A."/>
            <person name="Siqueira W.J."/>
            <person name="Sommer P."/>
            <person name="Tsai S.M."/>
            <person name="Simpson A.J.G."/>
            <person name="Ferro J.A."/>
            <person name="Camargo L.E.A."/>
            <person name="Kitajima J.P."/>
            <person name="Setubal J.C."/>
            <person name="Van Sluys M.A."/>
        </authorList>
    </citation>
    <scope>NUCLEOTIDE SEQUENCE [LARGE SCALE GENOMIC DNA]</scope>
    <source>
        <strain>Fiocruz L1-130</strain>
    </source>
</reference>
<organism>
    <name type="scientific">Leptospira interrogans serogroup Icterohaemorrhagiae serovar copenhageni (strain Fiocruz L1-130)</name>
    <dbReference type="NCBI Taxonomy" id="267671"/>
    <lineage>
        <taxon>Bacteria</taxon>
        <taxon>Pseudomonadati</taxon>
        <taxon>Spirochaetota</taxon>
        <taxon>Spirochaetia</taxon>
        <taxon>Leptospirales</taxon>
        <taxon>Leptospiraceae</taxon>
        <taxon>Leptospira</taxon>
    </lineage>
</organism>
<evidence type="ECO:0000255" key="1">
    <source>
        <dbReference type="HAMAP-Rule" id="MF_00268"/>
    </source>
</evidence>
<comment type="function">
    <text evidence="1">Can catalyze the hydrolysis of ATP in the presence of single-stranded DNA, the ATP-dependent uptake of single-stranded DNA by duplex DNA, and the ATP-dependent hybridization of homologous single-stranded DNAs. It interacts with LexA causing its activation and leading to its autocatalytic cleavage.</text>
</comment>
<comment type="subcellular location">
    <subcellularLocation>
        <location evidence="1">Cytoplasm</location>
    </subcellularLocation>
</comment>
<comment type="similarity">
    <text evidence="1">Belongs to the RecA family.</text>
</comment>
<proteinExistence type="inferred from homology"/>
<protein>
    <recommendedName>
        <fullName evidence="1">Protein RecA</fullName>
    </recommendedName>
    <alternativeName>
        <fullName evidence="1">Recombinase A</fullName>
    </alternativeName>
</protein>